<protein>
    <recommendedName>
        <fullName evidence="1">Ribonuclease 3</fullName>
        <ecNumber evidence="1">3.1.26.3</ecNumber>
    </recommendedName>
    <alternativeName>
        <fullName evidence="1">Ribonuclease III</fullName>
        <shortName evidence="1">RNase III</shortName>
    </alternativeName>
</protein>
<evidence type="ECO:0000255" key="1">
    <source>
        <dbReference type="HAMAP-Rule" id="MF_00104"/>
    </source>
</evidence>
<keyword id="KW-0963">Cytoplasm</keyword>
<keyword id="KW-0255">Endonuclease</keyword>
<keyword id="KW-0378">Hydrolase</keyword>
<keyword id="KW-0460">Magnesium</keyword>
<keyword id="KW-0479">Metal-binding</keyword>
<keyword id="KW-0507">mRNA processing</keyword>
<keyword id="KW-0540">Nuclease</keyword>
<keyword id="KW-1185">Reference proteome</keyword>
<keyword id="KW-0694">RNA-binding</keyword>
<keyword id="KW-0698">rRNA processing</keyword>
<keyword id="KW-0699">rRNA-binding</keyword>
<keyword id="KW-0819">tRNA processing</keyword>
<organism>
    <name type="scientific">Shewanella amazonensis (strain ATCC BAA-1098 / SB2B)</name>
    <dbReference type="NCBI Taxonomy" id="326297"/>
    <lineage>
        <taxon>Bacteria</taxon>
        <taxon>Pseudomonadati</taxon>
        <taxon>Pseudomonadota</taxon>
        <taxon>Gammaproteobacteria</taxon>
        <taxon>Alteromonadales</taxon>
        <taxon>Shewanellaceae</taxon>
        <taxon>Shewanella</taxon>
    </lineage>
</organism>
<name>RNC_SHEAM</name>
<proteinExistence type="inferred from homology"/>
<sequence>MEPIKNLPRLCRTLGYEFSDIRLLEQALTHRSASNQHNERLEFLGDSILSIVISDALFHQFPKATEGDLSRMRATLVRGDTLAVIAKEFKLGDYLNLGPGELKSGGFRRESILADAVEAIIGAVYLDADLETCRSLLLGWYETRLADIKPGVGQKDAKTLLQEYLQGMKKPLPEYQVTQVEGEAHDQTFTVECRVTDLADAVVGVGSSRRKAEQMAAAQVLELLNQ</sequence>
<gene>
    <name evidence="1" type="primary">rnc</name>
    <name type="ordered locus">Sama_0880</name>
</gene>
<feature type="chain" id="PRO_1000075807" description="Ribonuclease 3">
    <location>
        <begin position="1"/>
        <end position="226"/>
    </location>
</feature>
<feature type="domain" description="RNase III" evidence="1">
    <location>
        <begin position="7"/>
        <end position="129"/>
    </location>
</feature>
<feature type="domain" description="DRBM" evidence="1">
    <location>
        <begin position="156"/>
        <end position="226"/>
    </location>
</feature>
<feature type="active site" evidence="1">
    <location>
        <position position="46"/>
    </location>
</feature>
<feature type="active site" evidence="1">
    <location>
        <position position="118"/>
    </location>
</feature>
<feature type="binding site" evidence="1">
    <location>
        <position position="42"/>
    </location>
    <ligand>
        <name>Mg(2+)</name>
        <dbReference type="ChEBI" id="CHEBI:18420"/>
    </ligand>
</feature>
<feature type="binding site" evidence="1">
    <location>
        <position position="115"/>
    </location>
    <ligand>
        <name>Mg(2+)</name>
        <dbReference type="ChEBI" id="CHEBI:18420"/>
    </ligand>
</feature>
<feature type="binding site" evidence="1">
    <location>
        <position position="118"/>
    </location>
    <ligand>
        <name>Mg(2+)</name>
        <dbReference type="ChEBI" id="CHEBI:18420"/>
    </ligand>
</feature>
<comment type="function">
    <text evidence="1">Digests double-stranded RNA. Involved in the processing of primary rRNA transcript to yield the immediate precursors to the large and small rRNAs (23S and 16S). Processes some mRNAs, and tRNAs when they are encoded in the rRNA operon. Processes pre-crRNA and tracrRNA of type II CRISPR loci if present in the organism.</text>
</comment>
<comment type="catalytic activity">
    <reaction evidence="1">
        <text>Endonucleolytic cleavage to 5'-phosphomonoester.</text>
        <dbReference type="EC" id="3.1.26.3"/>
    </reaction>
</comment>
<comment type="cofactor">
    <cofactor evidence="1">
        <name>Mg(2+)</name>
        <dbReference type="ChEBI" id="CHEBI:18420"/>
    </cofactor>
</comment>
<comment type="subunit">
    <text evidence="1">Homodimer.</text>
</comment>
<comment type="subcellular location">
    <subcellularLocation>
        <location evidence="1">Cytoplasm</location>
    </subcellularLocation>
</comment>
<comment type="similarity">
    <text evidence="1">Belongs to the ribonuclease III family.</text>
</comment>
<dbReference type="EC" id="3.1.26.3" evidence="1"/>
<dbReference type="EMBL" id="CP000507">
    <property type="protein sequence ID" value="ABL99087.1"/>
    <property type="molecule type" value="Genomic_DNA"/>
</dbReference>
<dbReference type="RefSeq" id="WP_011758997.1">
    <property type="nucleotide sequence ID" value="NC_008700.1"/>
</dbReference>
<dbReference type="SMR" id="A1S3Y1"/>
<dbReference type="STRING" id="326297.Sama_0880"/>
<dbReference type="KEGG" id="saz:Sama_0880"/>
<dbReference type="eggNOG" id="COG0571">
    <property type="taxonomic scope" value="Bacteria"/>
</dbReference>
<dbReference type="HOGENOM" id="CLU_000907_1_1_6"/>
<dbReference type="OrthoDB" id="9805026at2"/>
<dbReference type="Proteomes" id="UP000009175">
    <property type="component" value="Chromosome"/>
</dbReference>
<dbReference type="GO" id="GO:0005737">
    <property type="term" value="C:cytoplasm"/>
    <property type="evidence" value="ECO:0007669"/>
    <property type="project" value="UniProtKB-SubCell"/>
</dbReference>
<dbReference type="GO" id="GO:0003725">
    <property type="term" value="F:double-stranded RNA binding"/>
    <property type="evidence" value="ECO:0007669"/>
    <property type="project" value="TreeGrafter"/>
</dbReference>
<dbReference type="GO" id="GO:0046872">
    <property type="term" value="F:metal ion binding"/>
    <property type="evidence" value="ECO:0007669"/>
    <property type="project" value="UniProtKB-KW"/>
</dbReference>
<dbReference type="GO" id="GO:0004525">
    <property type="term" value="F:ribonuclease III activity"/>
    <property type="evidence" value="ECO:0007669"/>
    <property type="project" value="UniProtKB-UniRule"/>
</dbReference>
<dbReference type="GO" id="GO:0019843">
    <property type="term" value="F:rRNA binding"/>
    <property type="evidence" value="ECO:0007669"/>
    <property type="project" value="UniProtKB-KW"/>
</dbReference>
<dbReference type="GO" id="GO:0006397">
    <property type="term" value="P:mRNA processing"/>
    <property type="evidence" value="ECO:0007669"/>
    <property type="project" value="UniProtKB-UniRule"/>
</dbReference>
<dbReference type="GO" id="GO:0010468">
    <property type="term" value="P:regulation of gene expression"/>
    <property type="evidence" value="ECO:0007669"/>
    <property type="project" value="TreeGrafter"/>
</dbReference>
<dbReference type="GO" id="GO:0006364">
    <property type="term" value="P:rRNA processing"/>
    <property type="evidence" value="ECO:0007669"/>
    <property type="project" value="UniProtKB-UniRule"/>
</dbReference>
<dbReference type="GO" id="GO:0008033">
    <property type="term" value="P:tRNA processing"/>
    <property type="evidence" value="ECO:0007669"/>
    <property type="project" value="UniProtKB-KW"/>
</dbReference>
<dbReference type="CDD" id="cd10845">
    <property type="entry name" value="DSRM_RNAse_III_family"/>
    <property type="match status" value="1"/>
</dbReference>
<dbReference type="CDD" id="cd00593">
    <property type="entry name" value="RIBOc"/>
    <property type="match status" value="1"/>
</dbReference>
<dbReference type="FunFam" id="1.10.1520.10:FF:000001">
    <property type="entry name" value="Ribonuclease 3"/>
    <property type="match status" value="1"/>
</dbReference>
<dbReference type="FunFam" id="3.30.160.20:FF:000003">
    <property type="entry name" value="Ribonuclease 3"/>
    <property type="match status" value="1"/>
</dbReference>
<dbReference type="Gene3D" id="3.30.160.20">
    <property type="match status" value="1"/>
</dbReference>
<dbReference type="Gene3D" id="1.10.1520.10">
    <property type="entry name" value="Ribonuclease III domain"/>
    <property type="match status" value="1"/>
</dbReference>
<dbReference type="HAMAP" id="MF_00104">
    <property type="entry name" value="RNase_III"/>
    <property type="match status" value="1"/>
</dbReference>
<dbReference type="InterPro" id="IPR014720">
    <property type="entry name" value="dsRBD_dom"/>
</dbReference>
<dbReference type="InterPro" id="IPR011907">
    <property type="entry name" value="RNase_III"/>
</dbReference>
<dbReference type="InterPro" id="IPR000999">
    <property type="entry name" value="RNase_III_dom"/>
</dbReference>
<dbReference type="InterPro" id="IPR036389">
    <property type="entry name" value="RNase_III_sf"/>
</dbReference>
<dbReference type="NCBIfam" id="TIGR02191">
    <property type="entry name" value="RNaseIII"/>
    <property type="match status" value="1"/>
</dbReference>
<dbReference type="PANTHER" id="PTHR11207:SF0">
    <property type="entry name" value="RIBONUCLEASE 3"/>
    <property type="match status" value="1"/>
</dbReference>
<dbReference type="PANTHER" id="PTHR11207">
    <property type="entry name" value="RIBONUCLEASE III"/>
    <property type="match status" value="1"/>
</dbReference>
<dbReference type="Pfam" id="PF00035">
    <property type="entry name" value="dsrm"/>
    <property type="match status" value="1"/>
</dbReference>
<dbReference type="Pfam" id="PF14622">
    <property type="entry name" value="Ribonucleas_3_3"/>
    <property type="match status" value="1"/>
</dbReference>
<dbReference type="SMART" id="SM00358">
    <property type="entry name" value="DSRM"/>
    <property type="match status" value="1"/>
</dbReference>
<dbReference type="SMART" id="SM00535">
    <property type="entry name" value="RIBOc"/>
    <property type="match status" value="1"/>
</dbReference>
<dbReference type="SUPFAM" id="SSF54768">
    <property type="entry name" value="dsRNA-binding domain-like"/>
    <property type="match status" value="1"/>
</dbReference>
<dbReference type="SUPFAM" id="SSF69065">
    <property type="entry name" value="RNase III domain-like"/>
    <property type="match status" value="1"/>
</dbReference>
<dbReference type="PROSITE" id="PS50137">
    <property type="entry name" value="DS_RBD"/>
    <property type="match status" value="1"/>
</dbReference>
<dbReference type="PROSITE" id="PS00517">
    <property type="entry name" value="RNASE_3_1"/>
    <property type="match status" value="1"/>
</dbReference>
<dbReference type="PROSITE" id="PS50142">
    <property type="entry name" value="RNASE_3_2"/>
    <property type="match status" value="1"/>
</dbReference>
<reference key="1">
    <citation type="submission" date="2006-12" db="EMBL/GenBank/DDBJ databases">
        <title>Complete sequence of Shewanella amazonensis SB2B.</title>
        <authorList>
            <consortium name="US DOE Joint Genome Institute"/>
            <person name="Copeland A."/>
            <person name="Lucas S."/>
            <person name="Lapidus A."/>
            <person name="Barry K."/>
            <person name="Detter J.C."/>
            <person name="Glavina del Rio T."/>
            <person name="Hammon N."/>
            <person name="Israni S."/>
            <person name="Dalin E."/>
            <person name="Tice H."/>
            <person name="Pitluck S."/>
            <person name="Munk A.C."/>
            <person name="Brettin T."/>
            <person name="Bruce D."/>
            <person name="Han C."/>
            <person name="Tapia R."/>
            <person name="Gilna P."/>
            <person name="Schmutz J."/>
            <person name="Larimer F."/>
            <person name="Land M."/>
            <person name="Hauser L."/>
            <person name="Kyrpides N."/>
            <person name="Mikhailova N."/>
            <person name="Fredrickson J."/>
            <person name="Richardson P."/>
        </authorList>
    </citation>
    <scope>NUCLEOTIDE SEQUENCE [LARGE SCALE GENOMIC DNA]</scope>
    <source>
        <strain>ATCC BAA-1098 / SB2B</strain>
    </source>
</reference>
<accession>A1S3Y1</accession>